<gene>
    <name type="primary">TRAPPC2</name>
</gene>
<proteinExistence type="evidence at transcript level"/>
<feature type="chain" id="PRO_0000260209" description="Trafficking protein particle complex subunit 2">
    <location>
        <begin position="1"/>
        <end position="140"/>
    </location>
</feature>
<dbReference type="EMBL" id="CR857440">
    <property type="protein sequence ID" value="CAH89731.1"/>
    <property type="molecule type" value="mRNA"/>
</dbReference>
<dbReference type="RefSeq" id="NP_001124790.1">
    <property type="nucleotide sequence ID" value="NM_001131318.2"/>
</dbReference>
<dbReference type="SMR" id="Q5RES6"/>
<dbReference type="FunCoup" id="Q5RES6">
    <property type="interactions" value="2474"/>
</dbReference>
<dbReference type="STRING" id="9601.ENSPPYP00000011724"/>
<dbReference type="Ensembl" id="ENSPPYT00000012170.2">
    <property type="protein sequence ID" value="ENSPPYP00000011724.2"/>
    <property type="gene ID" value="ENSPPYG00000010463.3"/>
</dbReference>
<dbReference type="GeneID" id="100171643"/>
<dbReference type="KEGG" id="pon:100171643"/>
<dbReference type="CTD" id="10597"/>
<dbReference type="eggNOG" id="KOG3487">
    <property type="taxonomic scope" value="Eukaryota"/>
</dbReference>
<dbReference type="GeneTree" id="ENSGT00510000047168"/>
<dbReference type="HOGENOM" id="CLU_085828_3_0_1"/>
<dbReference type="InParanoid" id="Q5RES6"/>
<dbReference type="OMA" id="FFQELHE"/>
<dbReference type="OrthoDB" id="40579at2759"/>
<dbReference type="Proteomes" id="UP000001595">
    <property type="component" value="Chromosome 19"/>
</dbReference>
<dbReference type="GO" id="GO:0005783">
    <property type="term" value="C:endoplasmic reticulum"/>
    <property type="evidence" value="ECO:0007669"/>
    <property type="project" value="Ensembl"/>
</dbReference>
<dbReference type="GO" id="GO:0005793">
    <property type="term" value="C:endoplasmic reticulum-Golgi intermediate compartment"/>
    <property type="evidence" value="ECO:0007669"/>
    <property type="project" value="UniProtKB-SubCell"/>
</dbReference>
<dbReference type="GO" id="GO:0005640">
    <property type="term" value="C:nuclear outer membrane"/>
    <property type="evidence" value="ECO:0007669"/>
    <property type="project" value="Ensembl"/>
</dbReference>
<dbReference type="GO" id="GO:0005654">
    <property type="term" value="C:nucleoplasm"/>
    <property type="evidence" value="ECO:0007669"/>
    <property type="project" value="Ensembl"/>
</dbReference>
<dbReference type="GO" id="GO:0005634">
    <property type="term" value="C:nucleus"/>
    <property type="evidence" value="ECO:0000250"/>
    <property type="project" value="UniProtKB"/>
</dbReference>
<dbReference type="GO" id="GO:0048471">
    <property type="term" value="C:perinuclear region of cytoplasm"/>
    <property type="evidence" value="ECO:0007669"/>
    <property type="project" value="UniProtKB-SubCell"/>
</dbReference>
<dbReference type="GO" id="GO:0001222">
    <property type="term" value="F:transcription corepressor binding"/>
    <property type="evidence" value="ECO:0007669"/>
    <property type="project" value="Ensembl"/>
</dbReference>
<dbReference type="GO" id="GO:0140416">
    <property type="term" value="F:transcription regulator inhibitor activity"/>
    <property type="evidence" value="ECO:0007669"/>
    <property type="project" value="Ensembl"/>
</dbReference>
<dbReference type="GO" id="GO:0006888">
    <property type="term" value="P:endoplasmic reticulum to Golgi vesicle-mediated transport"/>
    <property type="evidence" value="ECO:0007669"/>
    <property type="project" value="InterPro"/>
</dbReference>
<dbReference type="GO" id="GO:0010628">
    <property type="term" value="P:positive regulation of gene expression"/>
    <property type="evidence" value="ECO:0007669"/>
    <property type="project" value="Ensembl"/>
</dbReference>
<dbReference type="CDD" id="cd14825">
    <property type="entry name" value="TRAPPC2_sedlin"/>
    <property type="match status" value="1"/>
</dbReference>
<dbReference type="FunFam" id="3.30.450.70:FF:000001">
    <property type="entry name" value="Trafficking protein particle complex subunit 2"/>
    <property type="match status" value="1"/>
</dbReference>
<dbReference type="Gene3D" id="3.30.450.70">
    <property type="match status" value="1"/>
</dbReference>
<dbReference type="InterPro" id="IPR011012">
    <property type="entry name" value="Longin-like_dom_sf"/>
</dbReference>
<dbReference type="InterPro" id="IPR006722">
    <property type="entry name" value="Sedlin"/>
</dbReference>
<dbReference type="PANTHER" id="PTHR12403">
    <property type="entry name" value="TRAFFICKING PROTEIN PARTICLE COMPLEX SUBUNIT 2"/>
    <property type="match status" value="1"/>
</dbReference>
<dbReference type="Pfam" id="PF04628">
    <property type="entry name" value="Sedlin_N"/>
    <property type="match status" value="1"/>
</dbReference>
<dbReference type="SUPFAM" id="SSF64356">
    <property type="entry name" value="SNARE-like"/>
    <property type="match status" value="1"/>
</dbReference>
<reference key="1">
    <citation type="submission" date="2004-11" db="EMBL/GenBank/DDBJ databases">
        <authorList>
            <consortium name="The German cDNA consortium"/>
        </authorList>
    </citation>
    <scope>NUCLEOTIDE SEQUENCE [LARGE SCALE MRNA]</scope>
    <source>
        <tissue>Kidney</tissue>
    </source>
</reference>
<evidence type="ECO:0000250" key="1"/>
<evidence type="ECO:0000250" key="2">
    <source>
        <dbReference type="UniProtKB" id="P0DI81"/>
    </source>
</evidence>
<evidence type="ECO:0000305" key="3"/>
<sequence>MSGSFYFVIVGHHDNPVFEMEFLPAGKAESKDDHRHLNQFIAHAALDLVDENMWLSNNMYLKTVDKFNEWFVSAFVTAGHMRFIMLHDVRQEDGIKNFFTDVYDLYIKFSMNPFYEPNSPIRSSAFDRKVQFLGKKHLLS</sequence>
<accession>Q5RES6</accession>
<organism>
    <name type="scientific">Pongo abelii</name>
    <name type="common">Sumatran orangutan</name>
    <name type="synonym">Pongo pygmaeus abelii</name>
    <dbReference type="NCBI Taxonomy" id="9601"/>
    <lineage>
        <taxon>Eukaryota</taxon>
        <taxon>Metazoa</taxon>
        <taxon>Chordata</taxon>
        <taxon>Craniata</taxon>
        <taxon>Vertebrata</taxon>
        <taxon>Euteleostomi</taxon>
        <taxon>Mammalia</taxon>
        <taxon>Eutheria</taxon>
        <taxon>Euarchontoglires</taxon>
        <taxon>Primates</taxon>
        <taxon>Haplorrhini</taxon>
        <taxon>Catarrhini</taxon>
        <taxon>Hominidae</taxon>
        <taxon>Pongo</taxon>
    </lineage>
</organism>
<protein>
    <recommendedName>
        <fullName>Trafficking protein particle complex subunit 2</fullName>
    </recommendedName>
</protein>
<name>TPPC2_PONAB</name>
<comment type="function">
    <text evidence="1">Prevents ENO1-mediated transcriptional repression and antagonizes ENO1-mediated cell death. May play a role in vesicular transport from endoplasmic reticulum to Golgi (By similarity).</text>
</comment>
<comment type="subunit">
    <text evidence="1">Part of the multisubunit TRAPP (transport protein particle) complex. Interacts with ENO1, PITX1, SF1, TRAPPC2L and TRAPPC3.</text>
</comment>
<comment type="subcellular location">
    <subcellularLocation>
        <location evidence="2">Cytoplasm</location>
        <location evidence="2">Perinuclear region</location>
    </subcellularLocation>
    <subcellularLocation>
        <location evidence="2">Nucleus</location>
    </subcellularLocation>
    <subcellularLocation>
        <location evidence="2">Endoplasmic reticulum-Golgi intermediate compartment</location>
    </subcellularLocation>
    <subcellularLocation>
        <location evidence="2">Cytoplasm</location>
    </subcellularLocation>
    <text evidence="2">Localized in perinuclear granular structures.</text>
</comment>
<comment type="similarity">
    <text evidence="3">Belongs to the TRAPP small subunits family. Sedlin subfamily.</text>
</comment>
<keyword id="KW-0963">Cytoplasm</keyword>
<keyword id="KW-0931">ER-Golgi transport</keyword>
<keyword id="KW-0539">Nucleus</keyword>
<keyword id="KW-1185">Reference proteome</keyword>
<keyword id="KW-0804">Transcription</keyword>
<keyword id="KW-0813">Transport</keyword>